<keyword id="KW-0963">Cytoplasm</keyword>
<keyword id="KW-0369">Histidine metabolism</keyword>
<keyword id="KW-0456">Lyase</keyword>
<proteinExistence type="inferred from homology"/>
<feature type="chain" id="PRO_0000161023" description="Histidine ammonia-lyase">
    <location>
        <begin position="1"/>
        <end position="506"/>
    </location>
</feature>
<feature type="modified residue" description="2,3-didehydroalanine (Ser)" evidence="1">
    <location>
        <position position="144"/>
    </location>
</feature>
<feature type="cross-link" description="5-imidazolinone (Ala-Gly)" evidence="1">
    <location>
        <begin position="143"/>
        <end position="145"/>
    </location>
</feature>
<name>HUTH_SALCH</name>
<gene>
    <name evidence="1" type="primary">hutH</name>
    <name type="ordered locus">SCH_0789</name>
</gene>
<sequence length="506" mass="53869">MNTMTLTPGQLSLSQLYDVWRHPVQLRLDASAIDGINASVACVNDIVAEGRTAYGINTGFGLLAQTRIADEDLQNLQRSLVLSHAAGVGDPLDDAMVRLIMVLKINSLARGCSGIRLSVIEALIALVNAGVYPLIPAKGSVGASGDLAPLAHLSLMLLGEGKARWQGEWLPAQTALKKAGLEPVALAAKEGLALLNGTQASTAFALRGLFEAQELFASAVVCGALTTEAVLGSRRPFDARIHAARGQQGQIDVARLFRHLLTDTSAIAESHHHCHKVQDPYSLRCQPQVMGACLTQLRQTKEVLLAEANAVSDNPLVFADAGEVISGGNFHAEPVAMAADNLALAIAEIGALSERRIALMMDKHMSQLPPFLVKNGGVNSGFMIAQVTAAALASENKALAHPHSVDSLPTSANQEDHVSMAPAAGRRLWEMVANTRGIIAVEWLAACQGIDLREGLTSSPLLEQARQTLRERVAHYTQDRFFAPDIECATALLAQGALQRLVPDFM</sequence>
<accession>Q57RG6</accession>
<organism>
    <name type="scientific">Salmonella choleraesuis (strain SC-B67)</name>
    <dbReference type="NCBI Taxonomy" id="321314"/>
    <lineage>
        <taxon>Bacteria</taxon>
        <taxon>Pseudomonadati</taxon>
        <taxon>Pseudomonadota</taxon>
        <taxon>Gammaproteobacteria</taxon>
        <taxon>Enterobacterales</taxon>
        <taxon>Enterobacteriaceae</taxon>
        <taxon>Salmonella</taxon>
    </lineage>
</organism>
<dbReference type="EC" id="4.3.1.3" evidence="1"/>
<dbReference type="EMBL" id="AE017220">
    <property type="protein sequence ID" value="AAX64695.1"/>
    <property type="molecule type" value="Genomic_DNA"/>
</dbReference>
<dbReference type="RefSeq" id="WP_001539533.1">
    <property type="nucleotide sequence ID" value="NC_006905.1"/>
</dbReference>
<dbReference type="SMR" id="Q57RG6"/>
<dbReference type="KEGG" id="sec:SCH_0789"/>
<dbReference type="HOGENOM" id="CLU_014801_4_0_6"/>
<dbReference type="UniPathway" id="UPA00379">
    <property type="reaction ID" value="UER00549"/>
</dbReference>
<dbReference type="Proteomes" id="UP000000538">
    <property type="component" value="Chromosome"/>
</dbReference>
<dbReference type="GO" id="GO:0005737">
    <property type="term" value="C:cytoplasm"/>
    <property type="evidence" value="ECO:0007669"/>
    <property type="project" value="UniProtKB-SubCell"/>
</dbReference>
<dbReference type="GO" id="GO:0004397">
    <property type="term" value="F:histidine ammonia-lyase activity"/>
    <property type="evidence" value="ECO:0007669"/>
    <property type="project" value="UniProtKB-UniRule"/>
</dbReference>
<dbReference type="GO" id="GO:0019556">
    <property type="term" value="P:L-histidine catabolic process to glutamate and formamide"/>
    <property type="evidence" value="ECO:0007669"/>
    <property type="project" value="UniProtKB-UniPathway"/>
</dbReference>
<dbReference type="GO" id="GO:0019557">
    <property type="term" value="P:L-histidine catabolic process to glutamate and formate"/>
    <property type="evidence" value="ECO:0007669"/>
    <property type="project" value="UniProtKB-UniPathway"/>
</dbReference>
<dbReference type="CDD" id="cd00332">
    <property type="entry name" value="PAL-HAL"/>
    <property type="match status" value="1"/>
</dbReference>
<dbReference type="FunFam" id="1.10.275.10:FF:000005">
    <property type="entry name" value="Histidine ammonia-lyase"/>
    <property type="match status" value="1"/>
</dbReference>
<dbReference type="FunFam" id="1.20.200.10:FF:000003">
    <property type="entry name" value="Histidine ammonia-lyase"/>
    <property type="match status" value="1"/>
</dbReference>
<dbReference type="Gene3D" id="1.20.200.10">
    <property type="entry name" value="Fumarase/aspartase (Central domain)"/>
    <property type="match status" value="1"/>
</dbReference>
<dbReference type="Gene3D" id="1.10.275.10">
    <property type="entry name" value="Fumarase/aspartase (N-terminal domain)"/>
    <property type="match status" value="1"/>
</dbReference>
<dbReference type="HAMAP" id="MF_00229">
    <property type="entry name" value="His_ammonia_lyase"/>
    <property type="match status" value="1"/>
</dbReference>
<dbReference type="InterPro" id="IPR001106">
    <property type="entry name" value="Aromatic_Lyase"/>
</dbReference>
<dbReference type="InterPro" id="IPR024083">
    <property type="entry name" value="Fumarase/histidase_N"/>
</dbReference>
<dbReference type="InterPro" id="IPR005921">
    <property type="entry name" value="HutH"/>
</dbReference>
<dbReference type="InterPro" id="IPR008948">
    <property type="entry name" value="L-Aspartase-like"/>
</dbReference>
<dbReference type="InterPro" id="IPR022313">
    <property type="entry name" value="Phe/His_NH3-lyase_AS"/>
</dbReference>
<dbReference type="NCBIfam" id="TIGR01225">
    <property type="entry name" value="hutH"/>
    <property type="match status" value="1"/>
</dbReference>
<dbReference type="NCBIfam" id="NF006871">
    <property type="entry name" value="PRK09367.1"/>
    <property type="match status" value="1"/>
</dbReference>
<dbReference type="PANTHER" id="PTHR10362">
    <property type="entry name" value="HISTIDINE AMMONIA-LYASE"/>
    <property type="match status" value="1"/>
</dbReference>
<dbReference type="Pfam" id="PF00221">
    <property type="entry name" value="Lyase_aromatic"/>
    <property type="match status" value="1"/>
</dbReference>
<dbReference type="SUPFAM" id="SSF48557">
    <property type="entry name" value="L-aspartase-like"/>
    <property type="match status" value="1"/>
</dbReference>
<dbReference type="PROSITE" id="PS00488">
    <property type="entry name" value="PAL_HISTIDASE"/>
    <property type="match status" value="1"/>
</dbReference>
<comment type="catalytic activity">
    <reaction evidence="1">
        <text>L-histidine = trans-urocanate + NH4(+)</text>
        <dbReference type="Rhea" id="RHEA:21232"/>
        <dbReference type="ChEBI" id="CHEBI:17771"/>
        <dbReference type="ChEBI" id="CHEBI:28938"/>
        <dbReference type="ChEBI" id="CHEBI:57595"/>
        <dbReference type="EC" id="4.3.1.3"/>
    </reaction>
</comment>
<comment type="pathway">
    <text evidence="1">Amino-acid degradation; L-histidine degradation into L-glutamate; N-formimidoyl-L-glutamate from L-histidine: step 1/3.</text>
</comment>
<comment type="subcellular location">
    <subcellularLocation>
        <location evidence="1">Cytoplasm</location>
    </subcellularLocation>
</comment>
<comment type="PTM">
    <text evidence="1">Contains an active site 4-methylidene-imidazol-5-one (MIO), which is formed autocatalytically by cyclization and dehydration of residues Ala-Ser-Gly.</text>
</comment>
<comment type="similarity">
    <text evidence="1">Belongs to the PAL/histidase family.</text>
</comment>
<reference key="1">
    <citation type="journal article" date="2005" name="Nucleic Acids Res.">
        <title>The genome sequence of Salmonella enterica serovar Choleraesuis, a highly invasive and resistant zoonotic pathogen.</title>
        <authorList>
            <person name="Chiu C.-H."/>
            <person name="Tang P."/>
            <person name="Chu C."/>
            <person name="Hu S."/>
            <person name="Bao Q."/>
            <person name="Yu J."/>
            <person name="Chou Y.-Y."/>
            <person name="Wang H.-S."/>
            <person name="Lee Y.-S."/>
        </authorList>
    </citation>
    <scope>NUCLEOTIDE SEQUENCE [LARGE SCALE GENOMIC DNA]</scope>
    <source>
        <strain>SC-B67</strain>
    </source>
</reference>
<protein>
    <recommendedName>
        <fullName evidence="1">Histidine ammonia-lyase</fullName>
        <shortName evidence="1">Histidase</shortName>
        <ecNumber evidence="1">4.3.1.3</ecNumber>
    </recommendedName>
</protein>
<evidence type="ECO:0000255" key="1">
    <source>
        <dbReference type="HAMAP-Rule" id="MF_00229"/>
    </source>
</evidence>